<dbReference type="EC" id="3.6.1.27" evidence="1"/>
<dbReference type="EMBL" id="CP001120">
    <property type="protein sequence ID" value="ACF69244.1"/>
    <property type="molecule type" value="Genomic_DNA"/>
</dbReference>
<dbReference type="SMR" id="B4TI56"/>
<dbReference type="KEGG" id="seh:SeHA_C3459"/>
<dbReference type="HOGENOM" id="CLU_060296_2_0_6"/>
<dbReference type="Proteomes" id="UP000001866">
    <property type="component" value="Chromosome"/>
</dbReference>
<dbReference type="GO" id="GO:0005886">
    <property type="term" value="C:plasma membrane"/>
    <property type="evidence" value="ECO:0007669"/>
    <property type="project" value="UniProtKB-SubCell"/>
</dbReference>
<dbReference type="GO" id="GO:0050380">
    <property type="term" value="F:undecaprenyl-diphosphatase activity"/>
    <property type="evidence" value="ECO:0007669"/>
    <property type="project" value="UniProtKB-UniRule"/>
</dbReference>
<dbReference type="GO" id="GO:0071555">
    <property type="term" value="P:cell wall organization"/>
    <property type="evidence" value="ECO:0007669"/>
    <property type="project" value="UniProtKB-KW"/>
</dbReference>
<dbReference type="GO" id="GO:0009252">
    <property type="term" value="P:peptidoglycan biosynthetic process"/>
    <property type="evidence" value="ECO:0007669"/>
    <property type="project" value="UniProtKB-KW"/>
</dbReference>
<dbReference type="GO" id="GO:0008360">
    <property type="term" value="P:regulation of cell shape"/>
    <property type="evidence" value="ECO:0007669"/>
    <property type="project" value="UniProtKB-KW"/>
</dbReference>
<dbReference type="GO" id="GO:0046677">
    <property type="term" value="P:response to antibiotic"/>
    <property type="evidence" value="ECO:0007669"/>
    <property type="project" value="UniProtKB-UniRule"/>
</dbReference>
<dbReference type="HAMAP" id="MF_01006">
    <property type="entry name" value="Undec_diphosphatase"/>
    <property type="match status" value="1"/>
</dbReference>
<dbReference type="InterPro" id="IPR003824">
    <property type="entry name" value="UppP"/>
</dbReference>
<dbReference type="NCBIfam" id="NF001388">
    <property type="entry name" value="PRK00281.1-1"/>
    <property type="match status" value="1"/>
</dbReference>
<dbReference type="NCBIfam" id="NF001389">
    <property type="entry name" value="PRK00281.1-2"/>
    <property type="match status" value="1"/>
</dbReference>
<dbReference type="NCBIfam" id="NF001390">
    <property type="entry name" value="PRK00281.1-4"/>
    <property type="match status" value="1"/>
</dbReference>
<dbReference type="NCBIfam" id="TIGR00753">
    <property type="entry name" value="undec_PP_bacA"/>
    <property type="match status" value="1"/>
</dbReference>
<dbReference type="PANTHER" id="PTHR30622">
    <property type="entry name" value="UNDECAPRENYL-DIPHOSPHATASE"/>
    <property type="match status" value="1"/>
</dbReference>
<dbReference type="PANTHER" id="PTHR30622:SF3">
    <property type="entry name" value="UNDECAPRENYL-DIPHOSPHATASE"/>
    <property type="match status" value="1"/>
</dbReference>
<dbReference type="Pfam" id="PF02673">
    <property type="entry name" value="BacA"/>
    <property type="match status" value="1"/>
</dbReference>
<name>UPPP_SALHS</name>
<protein>
    <recommendedName>
        <fullName evidence="1">Undecaprenyl-diphosphatase</fullName>
        <ecNumber evidence="1">3.6.1.27</ecNumber>
    </recommendedName>
    <alternativeName>
        <fullName evidence="1">Bacitracin resistance protein</fullName>
    </alternativeName>
    <alternativeName>
        <fullName evidence="1">Undecaprenyl pyrophosphate phosphatase</fullName>
    </alternativeName>
</protein>
<organism>
    <name type="scientific">Salmonella heidelberg (strain SL476)</name>
    <dbReference type="NCBI Taxonomy" id="454169"/>
    <lineage>
        <taxon>Bacteria</taxon>
        <taxon>Pseudomonadati</taxon>
        <taxon>Pseudomonadota</taxon>
        <taxon>Gammaproteobacteria</taxon>
        <taxon>Enterobacterales</taxon>
        <taxon>Enterobacteriaceae</taxon>
        <taxon>Salmonella</taxon>
    </lineage>
</organism>
<feature type="chain" id="PRO_1000197400" description="Undecaprenyl-diphosphatase">
    <location>
        <begin position="1"/>
        <end position="273"/>
    </location>
</feature>
<feature type="transmembrane region" description="Helical" evidence="1">
    <location>
        <begin position="6"/>
        <end position="26"/>
    </location>
</feature>
<feature type="transmembrane region" description="Helical" evidence="1">
    <location>
        <begin position="45"/>
        <end position="65"/>
    </location>
</feature>
<feature type="transmembrane region" description="Helical" evidence="1">
    <location>
        <begin position="90"/>
        <end position="110"/>
    </location>
</feature>
<feature type="transmembrane region" description="Helical" evidence="1">
    <location>
        <begin position="116"/>
        <end position="136"/>
    </location>
</feature>
<feature type="transmembrane region" description="Helical" evidence="1">
    <location>
        <begin position="190"/>
        <end position="210"/>
    </location>
</feature>
<feature type="transmembrane region" description="Helical" evidence="1">
    <location>
        <begin position="222"/>
        <end position="242"/>
    </location>
</feature>
<feature type="transmembrane region" description="Helical" evidence="1">
    <location>
        <begin position="252"/>
        <end position="272"/>
    </location>
</feature>
<evidence type="ECO:0000255" key="1">
    <source>
        <dbReference type="HAMAP-Rule" id="MF_01006"/>
    </source>
</evidence>
<sequence length="273" mass="29792">MSDMHSLLIAAILGVVEGLTEFLPVSSTGHMIIVGHLLGFEGDTAKTFEVVIQLGSILAVVVMFWRRLFGLIGIHFGRPLQREGESKGRLTLIHILLGMIPAVVLGLVFHDTIKSLFNPINVMYALVVGGLLLIAAECLKPKEPRAPGLDDMTYRQAFMIGCFQCLALWPGFSRSGATISGGMLMGVSRYAASEFSFLLAVPMMMGATVLDLYKSWSFLTAADIPMFAVGFVTAFVVALIAIKTFLQLIKRISFIPFAIYRFVVAAAVYVVFF</sequence>
<comment type="function">
    <text evidence="1">Catalyzes the dephosphorylation of undecaprenyl diphosphate (UPP). Confers resistance to bacitracin.</text>
</comment>
<comment type="catalytic activity">
    <reaction evidence="1">
        <text>di-trans,octa-cis-undecaprenyl diphosphate + H2O = di-trans,octa-cis-undecaprenyl phosphate + phosphate + H(+)</text>
        <dbReference type="Rhea" id="RHEA:28094"/>
        <dbReference type="ChEBI" id="CHEBI:15377"/>
        <dbReference type="ChEBI" id="CHEBI:15378"/>
        <dbReference type="ChEBI" id="CHEBI:43474"/>
        <dbReference type="ChEBI" id="CHEBI:58405"/>
        <dbReference type="ChEBI" id="CHEBI:60392"/>
        <dbReference type="EC" id="3.6.1.27"/>
    </reaction>
</comment>
<comment type="subcellular location">
    <subcellularLocation>
        <location evidence="1">Cell inner membrane</location>
        <topology evidence="1">Multi-pass membrane protein</topology>
    </subcellularLocation>
</comment>
<comment type="miscellaneous">
    <text>Bacitracin is thought to be involved in the inhibition of peptidoglycan synthesis by sequestering undecaprenyl diphosphate, thereby reducing the pool of lipid carrier available.</text>
</comment>
<comment type="similarity">
    <text evidence="1">Belongs to the UppP family.</text>
</comment>
<gene>
    <name evidence="1" type="primary">uppP</name>
    <name type="ordered locus">SeHA_C3459</name>
</gene>
<accession>B4TI56</accession>
<proteinExistence type="inferred from homology"/>
<keyword id="KW-0046">Antibiotic resistance</keyword>
<keyword id="KW-0997">Cell inner membrane</keyword>
<keyword id="KW-1003">Cell membrane</keyword>
<keyword id="KW-0133">Cell shape</keyword>
<keyword id="KW-0961">Cell wall biogenesis/degradation</keyword>
<keyword id="KW-0378">Hydrolase</keyword>
<keyword id="KW-0472">Membrane</keyword>
<keyword id="KW-0573">Peptidoglycan synthesis</keyword>
<keyword id="KW-0812">Transmembrane</keyword>
<keyword id="KW-1133">Transmembrane helix</keyword>
<reference key="1">
    <citation type="journal article" date="2011" name="J. Bacteriol.">
        <title>Comparative genomics of 28 Salmonella enterica isolates: evidence for CRISPR-mediated adaptive sublineage evolution.</title>
        <authorList>
            <person name="Fricke W.F."/>
            <person name="Mammel M.K."/>
            <person name="McDermott P.F."/>
            <person name="Tartera C."/>
            <person name="White D.G."/>
            <person name="Leclerc J.E."/>
            <person name="Ravel J."/>
            <person name="Cebula T.A."/>
        </authorList>
    </citation>
    <scope>NUCLEOTIDE SEQUENCE [LARGE SCALE GENOMIC DNA]</scope>
    <source>
        <strain>SL476</strain>
    </source>
</reference>